<sequence>MTGYEARLITFGTWMYSVNKEQLARAGFYAIGQEDKVQCFHCGGGLANWKPKEDPWEQHAKWYPGCKYLLEEKGHEYINNIHLTRSLEGALVQTTKKTPSLTKRISDTIFPNPMLQEAIRMGFDFKDVKKIMEERIQTSGSNYKTLEVLVADLVSAQKDTTENELNQTSLQREISPEEPLRRLQEEKLCKICMDRHIAVVFIPCGHLVTCKQCAEAVDRCPMCSAVIDFKQRVFMS</sequence>
<keyword id="KW-0002">3D-structure</keyword>
<keyword id="KW-0053">Apoptosis</keyword>
<keyword id="KW-0963">Cytoplasm</keyword>
<keyword id="KW-0479">Metal-binding</keyword>
<keyword id="KW-1267">Proteomics identification</keyword>
<keyword id="KW-1185">Reference proteome</keyword>
<keyword id="KW-0862">Zinc</keyword>
<keyword id="KW-0863">Zinc-finger</keyword>
<name>BIRC8_HUMAN</name>
<gene>
    <name type="primary">BIRC8</name>
    <name type="synonym">ILP2</name>
</gene>
<accession>Q96P09</accession>
<accession>Q6IPY1</accession>
<accession>Q96RW5</accession>
<comment type="function">
    <text>Protects against apoptosis mediated by BAX.</text>
</comment>
<comment type="subunit">
    <text>Binds to caspase-9.</text>
</comment>
<comment type="subcellular location">
    <subcellularLocation>
        <location evidence="5">Cytoplasm</location>
    </subcellularLocation>
</comment>
<comment type="tissue specificity">
    <text>Testis specific in normal tissues.</text>
</comment>
<comment type="similarity">
    <text evidence="5">Belongs to the IAP family.</text>
</comment>
<proteinExistence type="evidence at protein level"/>
<organism>
    <name type="scientific">Homo sapiens</name>
    <name type="common">Human</name>
    <dbReference type="NCBI Taxonomy" id="9606"/>
    <lineage>
        <taxon>Eukaryota</taxon>
        <taxon>Metazoa</taxon>
        <taxon>Chordata</taxon>
        <taxon>Craniata</taxon>
        <taxon>Vertebrata</taxon>
        <taxon>Euteleostomi</taxon>
        <taxon>Mammalia</taxon>
        <taxon>Eutheria</taxon>
        <taxon>Euarchontoglires</taxon>
        <taxon>Primates</taxon>
        <taxon>Haplorrhini</taxon>
        <taxon>Catarrhini</taxon>
        <taxon>Hominidae</taxon>
        <taxon>Homo</taxon>
    </lineage>
</organism>
<dbReference type="EMBL" id="AF420440">
    <property type="protein sequence ID" value="AAL30369.1"/>
    <property type="molecule type" value="mRNA"/>
</dbReference>
<dbReference type="EMBL" id="AF164682">
    <property type="protein sequence ID" value="AAK81892.1"/>
    <property type="molecule type" value="Genomic_DNA"/>
</dbReference>
<dbReference type="EMBL" id="AC092070">
    <property type="status" value="NOT_ANNOTATED_CDS"/>
    <property type="molecule type" value="Genomic_DNA"/>
</dbReference>
<dbReference type="EMBL" id="BC071665">
    <property type="protein sequence ID" value="AAH71665.2"/>
    <property type="molecule type" value="mRNA"/>
</dbReference>
<dbReference type="RefSeq" id="NP_203127.3">
    <property type="nucleotide sequence ID" value="NM_033341.4"/>
</dbReference>
<dbReference type="PDB" id="1XB0">
    <property type="method" value="X-ray"/>
    <property type="resolution" value="2.20 A"/>
    <property type="chains" value="A/B/C/D/E/F=1-95"/>
</dbReference>
<dbReference type="PDB" id="1XB1">
    <property type="method" value="X-ray"/>
    <property type="resolution" value="2.70 A"/>
    <property type="chains" value="A/B/C/D/E/F=1-95"/>
</dbReference>
<dbReference type="PDBsum" id="1XB0"/>
<dbReference type="PDBsum" id="1XB1"/>
<dbReference type="SMR" id="Q96P09"/>
<dbReference type="BioGRID" id="125186">
    <property type="interactions" value="33"/>
</dbReference>
<dbReference type="FunCoup" id="Q96P09">
    <property type="interactions" value="7"/>
</dbReference>
<dbReference type="IntAct" id="Q96P09">
    <property type="interactions" value="28"/>
</dbReference>
<dbReference type="MINT" id="Q96P09"/>
<dbReference type="BindingDB" id="Q96P09"/>
<dbReference type="ChEMBL" id="CHEMBL5851"/>
<dbReference type="MEROPS" id="I32.008"/>
<dbReference type="GlyGen" id="Q96P09">
    <property type="glycosylation" value="3 sites, 1 O-linked glycan (3 sites)"/>
</dbReference>
<dbReference type="iPTMnet" id="Q96P09"/>
<dbReference type="PhosphoSitePlus" id="Q96P09"/>
<dbReference type="BioMuta" id="BIRC8"/>
<dbReference type="DMDM" id="311033354"/>
<dbReference type="MassIVE" id="Q96P09"/>
<dbReference type="PaxDb" id="9606-ENSP00000412957"/>
<dbReference type="PeptideAtlas" id="Q96P09"/>
<dbReference type="DNASU" id="112401"/>
<dbReference type="UCSC" id="uc002qbk.4">
    <property type="organism name" value="human"/>
</dbReference>
<dbReference type="AGR" id="HGNC:14878"/>
<dbReference type="GeneCards" id="BIRC8"/>
<dbReference type="HGNC" id="HGNC:14878">
    <property type="gene designation" value="BIRC8"/>
</dbReference>
<dbReference type="MIM" id="621072">
    <property type="type" value="gene"/>
</dbReference>
<dbReference type="neXtProt" id="NX_Q96P09"/>
<dbReference type="PharmGKB" id="PA25365"/>
<dbReference type="eggNOG" id="KOG1101">
    <property type="taxonomic scope" value="Eukaryota"/>
</dbReference>
<dbReference type="HOGENOM" id="CLU_016347_2_0_1"/>
<dbReference type="InParanoid" id="Q96P09"/>
<dbReference type="PAN-GO" id="Q96P09">
    <property type="GO annotations" value="9 GO annotations based on evolutionary models"/>
</dbReference>
<dbReference type="PhylomeDB" id="Q96P09"/>
<dbReference type="TreeFam" id="TF105356"/>
<dbReference type="PathwayCommons" id="Q96P09"/>
<dbReference type="SignaLink" id="Q96P09"/>
<dbReference type="SIGNOR" id="Q96P09"/>
<dbReference type="BioGRID-ORCS" id="112401">
    <property type="hits" value="10 hits in 1179 CRISPR screens"/>
</dbReference>
<dbReference type="EvolutionaryTrace" id="Q96P09"/>
<dbReference type="GenomeRNAi" id="112401"/>
<dbReference type="Pharos" id="Q96P09">
    <property type="development level" value="Tchem"/>
</dbReference>
<dbReference type="PRO" id="PR:Q96P09"/>
<dbReference type="Proteomes" id="UP000005640">
    <property type="component" value="Unplaced"/>
</dbReference>
<dbReference type="RNAct" id="Q96P09">
    <property type="molecule type" value="protein"/>
</dbReference>
<dbReference type="GO" id="GO:0005737">
    <property type="term" value="C:cytoplasm"/>
    <property type="evidence" value="ECO:0000318"/>
    <property type="project" value="GO_Central"/>
</dbReference>
<dbReference type="GO" id="GO:0005634">
    <property type="term" value="C:nucleus"/>
    <property type="evidence" value="ECO:0000318"/>
    <property type="project" value="GO_Central"/>
</dbReference>
<dbReference type="GO" id="GO:0043027">
    <property type="term" value="F:cysteine-type endopeptidase inhibitor activity involved in apoptotic process"/>
    <property type="evidence" value="ECO:0000318"/>
    <property type="project" value="GO_Central"/>
</dbReference>
<dbReference type="GO" id="GO:0061630">
    <property type="term" value="F:ubiquitin protein ligase activity"/>
    <property type="evidence" value="ECO:0000318"/>
    <property type="project" value="GO_Central"/>
</dbReference>
<dbReference type="GO" id="GO:0008270">
    <property type="term" value="F:zinc ion binding"/>
    <property type="evidence" value="ECO:0007669"/>
    <property type="project" value="UniProtKB-KW"/>
</dbReference>
<dbReference type="GO" id="GO:0006915">
    <property type="term" value="P:apoptotic process"/>
    <property type="evidence" value="ECO:0007669"/>
    <property type="project" value="UniProtKB-KW"/>
</dbReference>
<dbReference type="GO" id="GO:0043066">
    <property type="term" value="P:negative regulation of apoptotic process"/>
    <property type="evidence" value="ECO:0000318"/>
    <property type="project" value="GO_Central"/>
</dbReference>
<dbReference type="GO" id="GO:0090263">
    <property type="term" value="P:positive regulation of canonical Wnt signaling pathway"/>
    <property type="evidence" value="ECO:0000318"/>
    <property type="project" value="GO_Central"/>
</dbReference>
<dbReference type="GO" id="GO:0031398">
    <property type="term" value="P:positive regulation of protein ubiquitination"/>
    <property type="evidence" value="ECO:0000318"/>
    <property type="project" value="GO_Central"/>
</dbReference>
<dbReference type="GO" id="GO:0051726">
    <property type="term" value="P:regulation of cell cycle"/>
    <property type="evidence" value="ECO:0000318"/>
    <property type="project" value="GO_Central"/>
</dbReference>
<dbReference type="CDD" id="cd00022">
    <property type="entry name" value="BIR"/>
    <property type="match status" value="1"/>
</dbReference>
<dbReference type="CDD" id="cd16714">
    <property type="entry name" value="RING-HC_BIRC4_8"/>
    <property type="match status" value="1"/>
</dbReference>
<dbReference type="CDD" id="cd14395">
    <property type="entry name" value="UBA_BIRC4_8"/>
    <property type="match status" value="1"/>
</dbReference>
<dbReference type="FunFam" id="3.30.40.10:FF:000184">
    <property type="entry name" value="Baculoviral IAP repeat containing 2"/>
    <property type="match status" value="1"/>
</dbReference>
<dbReference type="FunFam" id="1.10.1170.10:FF:000002">
    <property type="entry name" value="Baculoviral IAP repeat containing 7"/>
    <property type="match status" value="1"/>
</dbReference>
<dbReference type="FunFam" id="1.10.1170.10:FF:000003">
    <property type="entry name" value="E3 ubiquitin-protein ligase XIAP"/>
    <property type="match status" value="1"/>
</dbReference>
<dbReference type="FunFam" id="1.10.533.10:FF:000050">
    <property type="entry name" value="E3 ubiquitin-protein ligase XIAP"/>
    <property type="match status" value="1"/>
</dbReference>
<dbReference type="FunFam" id="1.10.8.10:FF:000065">
    <property type="entry name" value="E3 ubiquitin-protein ligase XIAP isoform X1"/>
    <property type="match status" value="1"/>
</dbReference>
<dbReference type="Gene3D" id="1.10.533.10">
    <property type="entry name" value="Death Domain, Fas"/>
    <property type="match status" value="1"/>
</dbReference>
<dbReference type="Gene3D" id="1.10.8.10">
    <property type="entry name" value="DNA helicase RuvA subunit, C-terminal domain"/>
    <property type="match status" value="1"/>
</dbReference>
<dbReference type="Gene3D" id="1.10.1170.10">
    <property type="entry name" value="Inhibitor Of Apoptosis Protein (2mihbC-IAP-1), Chain A"/>
    <property type="match status" value="2"/>
</dbReference>
<dbReference type="InterPro" id="IPR001370">
    <property type="entry name" value="BIR_rpt"/>
</dbReference>
<dbReference type="InterPro" id="IPR048875">
    <property type="entry name" value="BIRC2-3-like_UBA"/>
</dbReference>
<dbReference type="InterPro" id="IPR011029">
    <property type="entry name" value="DEATH-like_dom_sf"/>
</dbReference>
<dbReference type="InterPro" id="IPR050784">
    <property type="entry name" value="IAP"/>
</dbReference>
<dbReference type="InterPro" id="IPR042579">
    <property type="entry name" value="XIAP/BIRC8_UBA"/>
</dbReference>
<dbReference type="InterPro" id="IPR001841">
    <property type="entry name" value="Znf_RING"/>
</dbReference>
<dbReference type="PANTHER" id="PTHR10044:SF167">
    <property type="entry name" value="BACULOVIRAL IAP REPEAT-CONTAINING PROTEIN 8"/>
    <property type="match status" value="1"/>
</dbReference>
<dbReference type="PANTHER" id="PTHR10044">
    <property type="entry name" value="INHIBITOR OF APOPTOSIS"/>
    <property type="match status" value="1"/>
</dbReference>
<dbReference type="Pfam" id="PF00653">
    <property type="entry name" value="BIR"/>
    <property type="match status" value="1"/>
</dbReference>
<dbReference type="Pfam" id="PF21290">
    <property type="entry name" value="UBA_BIRC2-3"/>
    <property type="match status" value="1"/>
</dbReference>
<dbReference type="Pfam" id="PF13920">
    <property type="entry name" value="zf-C3HC4_3"/>
    <property type="match status" value="1"/>
</dbReference>
<dbReference type="SMART" id="SM00238">
    <property type="entry name" value="BIR"/>
    <property type="match status" value="1"/>
</dbReference>
<dbReference type="SMART" id="SM00184">
    <property type="entry name" value="RING"/>
    <property type="match status" value="1"/>
</dbReference>
<dbReference type="SUPFAM" id="SSF57924">
    <property type="entry name" value="Inhibitor of apoptosis (IAP) repeat"/>
    <property type="match status" value="1"/>
</dbReference>
<dbReference type="PROSITE" id="PS01282">
    <property type="entry name" value="BIR_REPEAT_1"/>
    <property type="match status" value="1"/>
</dbReference>
<dbReference type="PROSITE" id="PS50143">
    <property type="entry name" value="BIR_REPEAT_2"/>
    <property type="match status" value="1"/>
</dbReference>
<dbReference type="PROSITE" id="PS50089">
    <property type="entry name" value="ZF_RING_2"/>
    <property type="match status" value="1"/>
</dbReference>
<feature type="chain" id="PRO_0000122363" description="Baculoviral IAP repeat-containing protein 8">
    <location>
        <begin position="1"/>
        <end position="236"/>
    </location>
</feature>
<feature type="repeat" description="BIR">
    <location>
        <begin position="7"/>
        <end position="70"/>
    </location>
</feature>
<feature type="zinc finger region" description="RING-type" evidence="2">
    <location>
        <begin position="189"/>
        <end position="224"/>
    </location>
</feature>
<feature type="binding site" evidence="1">
    <location>
        <position position="39"/>
    </location>
    <ligand>
        <name>Zn(2+)</name>
        <dbReference type="ChEBI" id="CHEBI:29105"/>
    </ligand>
</feature>
<feature type="binding site" evidence="1">
    <location>
        <position position="42"/>
    </location>
    <ligand>
        <name>Zn(2+)</name>
        <dbReference type="ChEBI" id="CHEBI:29105"/>
    </ligand>
</feature>
<feature type="binding site" evidence="1">
    <location>
        <position position="59"/>
    </location>
    <ligand>
        <name>Zn(2+)</name>
        <dbReference type="ChEBI" id="CHEBI:29105"/>
    </ligand>
</feature>
<feature type="binding site" evidence="1">
    <location>
        <position position="66"/>
    </location>
    <ligand>
        <name>Zn(2+)</name>
        <dbReference type="ChEBI" id="CHEBI:29105"/>
    </ligand>
</feature>
<feature type="sequence variant" id="VAR_055944" description="In dbSNP:rs35880972.">
    <original>A</original>
    <variation>T</variation>
    <location>
        <position position="156"/>
    </location>
</feature>
<feature type="sequence variant" id="VAR_055945" description="In dbSNP:rs34092035.">
    <original>L</original>
    <variation>S</variation>
    <location>
        <position position="165"/>
    </location>
</feature>
<feature type="sequence variant" id="VAR_028282" description="In dbSNP:rs8109165." evidence="3 4">
    <original>H</original>
    <variation>Y</variation>
    <location>
        <position position="196"/>
    </location>
</feature>
<feature type="sequence variant" id="VAR_055946" description="In dbSNP:rs35700345.">
    <original>A</original>
    <variation>T</variation>
    <location>
        <position position="225"/>
    </location>
</feature>
<feature type="sequence variant" id="VAR_055947" description="In dbSNP:rs34683072.">
    <original>A</original>
    <variation>V</variation>
    <location>
        <position position="225"/>
    </location>
</feature>
<feature type="helix" evidence="6">
    <location>
        <begin position="4"/>
        <end position="8"/>
    </location>
</feature>
<feature type="helix" evidence="6">
    <location>
        <begin position="9"/>
        <end position="11"/>
    </location>
</feature>
<feature type="strand" evidence="6">
    <location>
        <begin position="16"/>
        <end position="18"/>
    </location>
</feature>
<feature type="helix" evidence="6">
    <location>
        <begin position="20"/>
        <end position="25"/>
    </location>
</feature>
<feature type="strand" evidence="6">
    <location>
        <begin position="28"/>
        <end position="30"/>
    </location>
</feature>
<feature type="strand" evidence="6">
    <location>
        <begin position="37"/>
        <end position="39"/>
    </location>
</feature>
<feature type="turn" evidence="6">
    <location>
        <begin position="40"/>
        <end position="42"/>
    </location>
</feature>
<feature type="strand" evidence="6">
    <location>
        <begin position="45"/>
        <end position="48"/>
    </location>
</feature>
<feature type="helix" evidence="6">
    <location>
        <begin position="55"/>
        <end position="62"/>
    </location>
</feature>
<feature type="helix" evidence="6">
    <location>
        <begin position="67"/>
        <end position="73"/>
    </location>
</feature>
<feature type="helix" evidence="6">
    <location>
        <begin position="75"/>
        <end position="81"/>
    </location>
</feature>
<evidence type="ECO:0000255" key="1">
    <source>
        <dbReference type="PROSITE-ProRule" id="PRU00029"/>
    </source>
</evidence>
<evidence type="ECO:0000255" key="2">
    <source>
        <dbReference type="PROSITE-ProRule" id="PRU00175"/>
    </source>
</evidence>
<evidence type="ECO:0000269" key="3">
    <source>
    </source>
</evidence>
<evidence type="ECO:0000269" key="4">
    <source>
    </source>
</evidence>
<evidence type="ECO:0000305" key="5"/>
<evidence type="ECO:0007829" key="6">
    <source>
        <dbReference type="PDB" id="1XB0"/>
    </source>
</evidence>
<protein>
    <recommendedName>
        <fullName>Baculoviral IAP repeat-containing protein 8</fullName>
    </recommendedName>
    <alternativeName>
        <fullName>Inhibitor of apoptosis-like protein 2</fullName>
        <shortName>IAP-like protein 2</shortName>
        <shortName>ILP-2</shortName>
    </alternativeName>
    <alternativeName>
        <fullName>Testis-specific inhibitor of apoptosis</fullName>
    </alternativeName>
</protein>
<reference key="1">
    <citation type="journal article" date="2001" name="Genomics">
        <title>Genomic organization of the X-linked inhibitor of apoptosis and identification of a novel testis-specific transcript.</title>
        <authorList>
            <person name="Lagace M."/>
            <person name="Xuan J.-Y."/>
            <person name="Young S.S."/>
            <person name="McRoberts C."/>
            <person name="Maier J."/>
            <person name="Rajcan-Separovic E."/>
            <person name="Korneluk R.G."/>
        </authorList>
    </citation>
    <scope>NUCLEOTIDE SEQUENCE [MRNA]</scope>
    <scope>VARIANT TYR-196</scope>
    <source>
        <tissue>Testis</tissue>
    </source>
</reference>
<reference key="2">
    <citation type="journal article" date="2001" name="Mol. Cell. Biol.">
        <title>Molecular cloning of ILP-2, a novel member of the inhibitor of apoptosis protein family.</title>
        <authorList>
            <person name="Richter B.W.M."/>
            <person name="Mir S.S."/>
            <person name="Eiben L.J."/>
            <person name="Lewis J."/>
            <person name="Reffey S.B."/>
            <person name="Frattini A."/>
            <person name="Tian L."/>
            <person name="Frank S."/>
            <person name="Youle R.J."/>
            <person name="Nelson D.L."/>
            <person name="Notarangelo L.D."/>
            <person name="Vezzoni P."/>
            <person name="Fearnhead H.O."/>
            <person name="Duckett C.S."/>
        </authorList>
    </citation>
    <scope>NUCLEOTIDE SEQUENCE [GENOMIC DNA]</scope>
</reference>
<reference key="3">
    <citation type="journal article" date="2004" name="Nature">
        <title>The DNA sequence and biology of human chromosome 19.</title>
        <authorList>
            <person name="Grimwood J."/>
            <person name="Gordon L.A."/>
            <person name="Olsen A.S."/>
            <person name="Terry A."/>
            <person name="Schmutz J."/>
            <person name="Lamerdin J.E."/>
            <person name="Hellsten U."/>
            <person name="Goodstein D."/>
            <person name="Couronne O."/>
            <person name="Tran-Gyamfi M."/>
            <person name="Aerts A."/>
            <person name="Altherr M."/>
            <person name="Ashworth L."/>
            <person name="Bajorek E."/>
            <person name="Black S."/>
            <person name="Branscomb E."/>
            <person name="Caenepeel S."/>
            <person name="Carrano A.V."/>
            <person name="Caoile C."/>
            <person name="Chan Y.M."/>
            <person name="Christensen M."/>
            <person name="Cleland C.A."/>
            <person name="Copeland A."/>
            <person name="Dalin E."/>
            <person name="Dehal P."/>
            <person name="Denys M."/>
            <person name="Detter J.C."/>
            <person name="Escobar J."/>
            <person name="Flowers D."/>
            <person name="Fotopulos D."/>
            <person name="Garcia C."/>
            <person name="Georgescu A.M."/>
            <person name="Glavina T."/>
            <person name="Gomez M."/>
            <person name="Gonzales E."/>
            <person name="Groza M."/>
            <person name="Hammon N."/>
            <person name="Hawkins T."/>
            <person name="Haydu L."/>
            <person name="Ho I."/>
            <person name="Huang W."/>
            <person name="Israni S."/>
            <person name="Jett J."/>
            <person name="Kadner K."/>
            <person name="Kimball H."/>
            <person name="Kobayashi A."/>
            <person name="Larionov V."/>
            <person name="Leem S.-H."/>
            <person name="Lopez F."/>
            <person name="Lou Y."/>
            <person name="Lowry S."/>
            <person name="Malfatti S."/>
            <person name="Martinez D."/>
            <person name="McCready P.M."/>
            <person name="Medina C."/>
            <person name="Morgan J."/>
            <person name="Nelson K."/>
            <person name="Nolan M."/>
            <person name="Ovcharenko I."/>
            <person name="Pitluck S."/>
            <person name="Pollard M."/>
            <person name="Popkie A.P."/>
            <person name="Predki P."/>
            <person name="Quan G."/>
            <person name="Ramirez L."/>
            <person name="Rash S."/>
            <person name="Retterer J."/>
            <person name="Rodriguez A."/>
            <person name="Rogers S."/>
            <person name="Salamov A."/>
            <person name="Salazar A."/>
            <person name="She X."/>
            <person name="Smith D."/>
            <person name="Slezak T."/>
            <person name="Solovyev V."/>
            <person name="Thayer N."/>
            <person name="Tice H."/>
            <person name="Tsai M."/>
            <person name="Ustaszewska A."/>
            <person name="Vo N."/>
            <person name="Wagner M."/>
            <person name="Wheeler J."/>
            <person name="Wu K."/>
            <person name="Xie G."/>
            <person name="Yang J."/>
            <person name="Dubchak I."/>
            <person name="Furey T.S."/>
            <person name="DeJong P."/>
            <person name="Dickson M."/>
            <person name="Gordon D."/>
            <person name="Eichler E.E."/>
            <person name="Pennacchio L.A."/>
            <person name="Richardson P."/>
            <person name="Stubbs L."/>
            <person name="Rokhsar D.S."/>
            <person name="Myers R.M."/>
            <person name="Rubin E.M."/>
            <person name="Lucas S.M."/>
        </authorList>
    </citation>
    <scope>NUCLEOTIDE SEQUENCE [LARGE SCALE GENOMIC DNA]</scope>
</reference>
<reference key="4">
    <citation type="journal article" date="2004" name="Genome Res.">
        <title>The status, quality, and expansion of the NIH full-length cDNA project: the Mammalian Gene Collection (MGC).</title>
        <authorList>
            <consortium name="The MGC Project Team"/>
        </authorList>
    </citation>
    <scope>NUCLEOTIDE SEQUENCE [LARGE SCALE MRNA]</scope>
    <scope>VARIANT TYR-196</scope>
    <source>
        <tissue>Brain</tissue>
    </source>
</reference>
<reference key="5">
    <citation type="journal article" date="2005" name="Biochem. J.">
        <title>The BIR domain of IAP-like protein 2 is conformationally unstable: implications for caspase inhibition.</title>
        <authorList>
            <person name="Shin H."/>
            <person name="Renatus M."/>
            <person name="Eckelman B.P."/>
            <person name="Nunes V.A."/>
            <person name="Sampaio C.A."/>
            <person name="Salvesen G.S."/>
        </authorList>
    </citation>
    <scope>X-RAY CRYSTALLOGRAPHY (2.2 ANGSTROMS) OF 1-95</scope>
</reference>